<proteinExistence type="evidence at protein level"/>
<gene>
    <name type="primary">ADF2</name>
    <name type="ordered locus">At3g46000</name>
    <name type="ORF">F16L2_210</name>
</gene>
<dbReference type="EMBL" id="U48939">
    <property type="protein sequence ID" value="AAB03697.1"/>
    <property type="molecule type" value="mRNA"/>
</dbReference>
<dbReference type="EMBL" id="AL162459">
    <property type="protein sequence ID" value="CAB82824.1"/>
    <property type="status" value="ALT_INIT"/>
    <property type="molecule type" value="Genomic_DNA"/>
</dbReference>
<dbReference type="EMBL" id="CP002686">
    <property type="protein sequence ID" value="AEE78099.1"/>
    <property type="molecule type" value="Genomic_DNA"/>
</dbReference>
<dbReference type="EMBL" id="AF370482">
    <property type="protein sequence ID" value="AAK43859.1"/>
    <property type="molecule type" value="mRNA"/>
</dbReference>
<dbReference type="EMBL" id="AF386925">
    <property type="protein sequence ID" value="AAK62370.1"/>
    <property type="molecule type" value="mRNA"/>
</dbReference>
<dbReference type="EMBL" id="AY064660">
    <property type="protein sequence ID" value="AAL47369.1"/>
    <property type="molecule type" value="mRNA"/>
</dbReference>
<dbReference type="EMBL" id="BT000377">
    <property type="protein sequence ID" value="AAN15696.1"/>
    <property type="molecule type" value="mRNA"/>
</dbReference>
<dbReference type="PIR" id="T47540">
    <property type="entry name" value="T47540"/>
</dbReference>
<dbReference type="RefSeq" id="NP_001327290.1">
    <property type="nucleotide sequence ID" value="NM_001339233.1"/>
</dbReference>
<dbReference type="RefSeq" id="NP_566882.1">
    <property type="nucleotide sequence ID" value="NM_114469.5"/>
</dbReference>
<dbReference type="SMR" id="Q39251"/>
<dbReference type="FunCoup" id="Q39251">
    <property type="interactions" value="2856"/>
</dbReference>
<dbReference type="STRING" id="3702.Q39251"/>
<dbReference type="iPTMnet" id="Q39251"/>
<dbReference type="PaxDb" id="3702-AT3G46000.1"/>
<dbReference type="ProteomicsDB" id="244763"/>
<dbReference type="EnsemblPlants" id="AT3G46000.1">
    <property type="protein sequence ID" value="AT3G46000.1"/>
    <property type="gene ID" value="AT3G46000"/>
</dbReference>
<dbReference type="GeneID" id="823743"/>
<dbReference type="Gramene" id="AT3G46000.1">
    <property type="protein sequence ID" value="AT3G46000.1"/>
    <property type="gene ID" value="AT3G46000"/>
</dbReference>
<dbReference type="KEGG" id="ath:AT3G46000"/>
<dbReference type="Araport" id="AT3G46000"/>
<dbReference type="TAIR" id="AT3G46000">
    <property type="gene designation" value="ADF2"/>
</dbReference>
<dbReference type="eggNOG" id="KOG1735">
    <property type="taxonomic scope" value="Eukaryota"/>
</dbReference>
<dbReference type="HOGENOM" id="CLU_094004_2_2_1"/>
<dbReference type="InParanoid" id="Q39251"/>
<dbReference type="OMA" id="QCRFAVY"/>
<dbReference type="OrthoDB" id="10249245at2759"/>
<dbReference type="PhylomeDB" id="Q39251"/>
<dbReference type="CD-CODE" id="4299E36E">
    <property type="entry name" value="Nucleolus"/>
</dbReference>
<dbReference type="PRO" id="PR:Q39251"/>
<dbReference type="Proteomes" id="UP000006548">
    <property type="component" value="Chromosome 3"/>
</dbReference>
<dbReference type="ExpressionAtlas" id="Q39251">
    <property type="expression patterns" value="baseline and differential"/>
</dbReference>
<dbReference type="GO" id="GO:0015629">
    <property type="term" value="C:actin cytoskeleton"/>
    <property type="evidence" value="ECO:0007669"/>
    <property type="project" value="InterPro"/>
</dbReference>
<dbReference type="GO" id="GO:0005737">
    <property type="term" value="C:cytoplasm"/>
    <property type="evidence" value="ECO:0007005"/>
    <property type="project" value="TAIR"/>
</dbReference>
<dbReference type="GO" id="GO:0005829">
    <property type="term" value="C:cytosol"/>
    <property type="evidence" value="ECO:0007005"/>
    <property type="project" value="TAIR"/>
</dbReference>
<dbReference type="GO" id="GO:0005634">
    <property type="term" value="C:nucleus"/>
    <property type="evidence" value="ECO:0007005"/>
    <property type="project" value="TAIR"/>
</dbReference>
<dbReference type="GO" id="GO:0003779">
    <property type="term" value="F:actin binding"/>
    <property type="evidence" value="ECO:0007669"/>
    <property type="project" value="UniProtKB-KW"/>
</dbReference>
<dbReference type="GO" id="GO:0030042">
    <property type="term" value="P:actin filament depolymerization"/>
    <property type="evidence" value="ECO:0000314"/>
    <property type="project" value="TAIR"/>
</dbReference>
<dbReference type="GO" id="GO:0006952">
    <property type="term" value="P:defense response"/>
    <property type="evidence" value="ECO:0007669"/>
    <property type="project" value="UniProtKB-KW"/>
</dbReference>
<dbReference type="CDD" id="cd11286">
    <property type="entry name" value="ADF_cofilin_like"/>
    <property type="match status" value="1"/>
</dbReference>
<dbReference type="FunFam" id="3.40.20.10:FF:000025">
    <property type="entry name" value="Actin-depolymerizing factor 2"/>
    <property type="match status" value="1"/>
</dbReference>
<dbReference type="Gene3D" id="3.40.20.10">
    <property type="entry name" value="Severin"/>
    <property type="match status" value="1"/>
</dbReference>
<dbReference type="InterPro" id="IPR002108">
    <property type="entry name" value="ADF-H"/>
</dbReference>
<dbReference type="InterPro" id="IPR029006">
    <property type="entry name" value="ADF-H/Gelsolin-like_dom_sf"/>
</dbReference>
<dbReference type="InterPro" id="IPR017904">
    <property type="entry name" value="ADF/Cofilin"/>
</dbReference>
<dbReference type="PANTHER" id="PTHR11913">
    <property type="entry name" value="COFILIN-RELATED"/>
    <property type="match status" value="1"/>
</dbReference>
<dbReference type="Pfam" id="PF00241">
    <property type="entry name" value="Cofilin_ADF"/>
    <property type="match status" value="1"/>
</dbReference>
<dbReference type="SMART" id="SM00102">
    <property type="entry name" value="ADF"/>
    <property type="match status" value="1"/>
</dbReference>
<dbReference type="SUPFAM" id="SSF55753">
    <property type="entry name" value="Actin depolymerizing proteins"/>
    <property type="match status" value="1"/>
</dbReference>
<dbReference type="PROSITE" id="PS51263">
    <property type="entry name" value="ADF_H"/>
    <property type="match status" value="1"/>
</dbReference>
<organism>
    <name type="scientific">Arabidopsis thaliana</name>
    <name type="common">Mouse-ear cress</name>
    <dbReference type="NCBI Taxonomy" id="3702"/>
    <lineage>
        <taxon>Eukaryota</taxon>
        <taxon>Viridiplantae</taxon>
        <taxon>Streptophyta</taxon>
        <taxon>Embryophyta</taxon>
        <taxon>Tracheophyta</taxon>
        <taxon>Spermatophyta</taxon>
        <taxon>Magnoliopsida</taxon>
        <taxon>eudicotyledons</taxon>
        <taxon>Gunneridae</taxon>
        <taxon>Pentapetalae</taxon>
        <taxon>rosids</taxon>
        <taxon>malvids</taxon>
        <taxon>Brassicales</taxon>
        <taxon>Brassicaceae</taxon>
        <taxon>Camelineae</taxon>
        <taxon>Arabidopsis</taxon>
    </lineage>
</organism>
<accession>Q39251</accession>
<accession>Q9LZT2</accession>
<protein>
    <recommendedName>
        <fullName>Actin-depolymerizing factor 2</fullName>
        <shortName>ADF-2</shortName>
        <shortName>AtADF2</shortName>
    </recommendedName>
</protein>
<reference key="1">
    <citation type="submission" date="1996-02" db="EMBL/GenBank/DDBJ databases">
        <title>Actin depolymerizing factor from Arabidopsis thaliana severs polymers and binds to monomers in a pH-dependent manner.</title>
        <authorList>
            <person name="Staiger C.J."/>
            <person name="Ashworth S.L."/>
        </authorList>
    </citation>
    <scope>NUCLEOTIDE SEQUENCE [MRNA]</scope>
    <source>
        <strain>cv. Columbia</strain>
    </source>
</reference>
<reference key="2">
    <citation type="journal article" date="2000" name="Nature">
        <title>Sequence and analysis of chromosome 3 of the plant Arabidopsis thaliana.</title>
        <authorList>
            <person name="Salanoubat M."/>
            <person name="Lemcke K."/>
            <person name="Rieger M."/>
            <person name="Ansorge W."/>
            <person name="Unseld M."/>
            <person name="Fartmann B."/>
            <person name="Valle G."/>
            <person name="Bloecker H."/>
            <person name="Perez-Alonso M."/>
            <person name="Obermaier B."/>
            <person name="Delseny M."/>
            <person name="Boutry M."/>
            <person name="Grivell L.A."/>
            <person name="Mache R."/>
            <person name="Puigdomenech P."/>
            <person name="De Simone V."/>
            <person name="Choisne N."/>
            <person name="Artiguenave F."/>
            <person name="Robert C."/>
            <person name="Brottier P."/>
            <person name="Wincker P."/>
            <person name="Cattolico L."/>
            <person name="Weissenbach J."/>
            <person name="Saurin W."/>
            <person name="Quetier F."/>
            <person name="Schaefer M."/>
            <person name="Mueller-Auer S."/>
            <person name="Gabel C."/>
            <person name="Fuchs M."/>
            <person name="Benes V."/>
            <person name="Wurmbach E."/>
            <person name="Drzonek H."/>
            <person name="Erfle H."/>
            <person name="Jordan N."/>
            <person name="Bangert S."/>
            <person name="Wiedelmann R."/>
            <person name="Kranz H."/>
            <person name="Voss H."/>
            <person name="Holland R."/>
            <person name="Brandt P."/>
            <person name="Nyakatura G."/>
            <person name="Vezzi A."/>
            <person name="D'Angelo M."/>
            <person name="Pallavicini A."/>
            <person name="Toppo S."/>
            <person name="Simionati B."/>
            <person name="Conrad A."/>
            <person name="Hornischer K."/>
            <person name="Kauer G."/>
            <person name="Loehnert T.-H."/>
            <person name="Nordsiek G."/>
            <person name="Reichelt J."/>
            <person name="Scharfe M."/>
            <person name="Schoen O."/>
            <person name="Bargues M."/>
            <person name="Terol J."/>
            <person name="Climent J."/>
            <person name="Navarro P."/>
            <person name="Collado C."/>
            <person name="Perez-Perez A."/>
            <person name="Ottenwaelder B."/>
            <person name="Duchemin D."/>
            <person name="Cooke R."/>
            <person name="Laudie M."/>
            <person name="Berger-Llauro C."/>
            <person name="Purnelle B."/>
            <person name="Masuy D."/>
            <person name="de Haan M."/>
            <person name="Maarse A.C."/>
            <person name="Alcaraz J.-P."/>
            <person name="Cottet A."/>
            <person name="Casacuberta E."/>
            <person name="Monfort A."/>
            <person name="Argiriou A."/>
            <person name="Flores M."/>
            <person name="Liguori R."/>
            <person name="Vitale D."/>
            <person name="Mannhaupt G."/>
            <person name="Haase D."/>
            <person name="Schoof H."/>
            <person name="Rudd S."/>
            <person name="Zaccaria P."/>
            <person name="Mewes H.-W."/>
            <person name="Mayer K.F.X."/>
            <person name="Kaul S."/>
            <person name="Town C.D."/>
            <person name="Koo H.L."/>
            <person name="Tallon L.J."/>
            <person name="Jenkins J."/>
            <person name="Rooney T."/>
            <person name="Rizzo M."/>
            <person name="Walts A."/>
            <person name="Utterback T."/>
            <person name="Fujii C.Y."/>
            <person name="Shea T.P."/>
            <person name="Creasy T.H."/>
            <person name="Haas B."/>
            <person name="Maiti R."/>
            <person name="Wu D."/>
            <person name="Peterson J."/>
            <person name="Van Aken S."/>
            <person name="Pai G."/>
            <person name="Militscher J."/>
            <person name="Sellers P."/>
            <person name="Gill J.E."/>
            <person name="Feldblyum T.V."/>
            <person name="Preuss D."/>
            <person name="Lin X."/>
            <person name="Nierman W.C."/>
            <person name="Salzberg S.L."/>
            <person name="White O."/>
            <person name="Venter J.C."/>
            <person name="Fraser C.M."/>
            <person name="Kaneko T."/>
            <person name="Nakamura Y."/>
            <person name="Sato S."/>
            <person name="Kato T."/>
            <person name="Asamizu E."/>
            <person name="Sasamoto S."/>
            <person name="Kimura T."/>
            <person name="Idesawa K."/>
            <person name="Kawashima K."/>
            <person name="Kishida Y."/>
            <person name="Kiyokawa C."/>
            <person name="Kohara M."/>
            <person name="Matsumoto M."/>
            <person name="Matsuno A."/>
            <person name="Muraki A."/>
            <person name="Nakayama S."/>
            <person name="Nakazaki N."/>
            <person name="Shinpo S."/>
            <person name="Takeuchi C."/>
            <person name="Wada T."/>
            <person name="Watanabe A."/>
            <person name="Yamada M."/>
            <person name="Yasuda M."/>
            <person name="Tabata S."/>
        </authorList>
    </citation>
    <scope>NUCLEOTIDE SEQUENCE [LARGE SCALE GENOMIC DNA]</scope>
    <source>
        <strain>cv. Columbia</strain>
    </source>
</reference>
<reference key="3">
    <citation type="journal article" date="2017" name="Plant J.">
        <title>Araport11: a complete reannotation of the Arabidopsis thaliana reference genome.</title>
        <authorList>
            <person name="Cheng C.Y."/>
            <person name="Krishnakumar V."/>
            <person name="Chan A.P."/>
            <person name="Thibaud-Nissen F."/>
            <person name="Schobel S."/>
            <person name="Town C.D."/>
        </authorList>
    </citation>
    <scope>GENOME REANNOTATION</scope>
    <source>
        <strain>cv. Columbia</strain>
    </source>
</reference>
<reference key="4">
    <citation type="journal article" date="2003" name="Science">
        <title>Empirical analysis of transcriptional activity in the Arabidopsis genome.</title>
        <authorList>
            <person name="Yamada K."/>
            <person name="Lim J."/>
            <person name="Dale J.M."/>
            <person name="Chen H."/>
            <person name="Shinn P."/>
            <person name="Palm C.J."/>
            <person name="Southwick A.M."/>
            <person name="Wu H.C."/>
            <person name="Kim C.J."/>
            <person name="Nguyen M."/>
            <person name="Pham P.K."/>
            <person name="Cheuk R.F."/>
            <person name="Karlin-Newmann G."/>
            <person name="Liu S.X."/>
            <person name="Lam B."/>
            <person name="Sakano H."/>
            <person name="Wu T."/>
            <person name="Yu G."/>
            <person name="Miranda M."/>
            <person name="Quach H.L."/>
            <person name="Tripp M."/>
            <person name="Chang C.H."/>
            <person name="Lee J.M."/>
            <person name="Toriumi M.J."/>
            <person name="Chan M.M."/>
            <person name="Tang C.C."/>
            <person name="Onodera C.S."/>
            <person name="Deng J.M."/>
            <person name="Akiyama K."/>
            <person name="Ansari Y."/>
            <person name="Arakawa T."/>
            <person name="Banh J."/>
            <person name="Banno F."/>
            <person name="Bowser L."/>
            <person name="Brooks S.Y."/>
            <person name="Carninci P."/>
            <person name="Chao Q."/>
            <person name="Choy N."/>
            <person name="Enju A."/>
            <person name="Goldsmith A.D."/>
            <person name="Gurjal M."/>
            <person name="Hansen N.F."/>
            <person name="Hayashizaki Y."/>
            <person name="Johnson-Hopson C."/>
            <person name="Hsuan V.W."/>
            <person name="Iida K."/>
            <person name="Karnes M."/>
            <person name="Khan S."/>
            <person name="Koesema E."/>
            <person name="Ishida J."/>
            <person name="Jiang P.X."/>
            <person name="Jones T."/>
            <person name="Kawai J."/>
            <person name="Kamiya A."/>
            <person name="Meyers C."/>
            <person name="Nakajima M."/>
            <person name="Narusaka M."/>
            <person name="Seki M."/>
            <person name="Sakurai T."/>
            <person name="Satou M."/>
            <person name="Tamse R."/>
            <person name="Vaysberg M."/>
            <person name="Wallender E.K."/>
            <person name="Wong C."/>
            <person name="Yamamura Y."/>
            <person name="Yuan S."/>
            <person name="Shinozaki K."/>
            <person name="Davis R.W."/>
            <person name="Theologis A."/>
            <person name="Ecker J.R."/>
        </authorList>
    </citation>
    <scope>NUCLEOTIDE SEQUENCE [LARGE SCALE MRNA]</scope>
    <source>
        <strain>cv. Columbia</strain>
    </source>
</reference>
<reference key="5">
    <citation type="journal article" date="2006" name="J. Plant Physiol.">
        <title>Comparative study of rice and Arabidopsis actin-depolymerizing factors gene families.</title>
        <authorList>
            <person name="Feng Y."/>
            <person name="Liu Q."/>
            <person name="Xue Q."/>
        </authorList>
    </citation>
    <scope>GENE FAMILY</scope>
</reference>
<reference key="6">
    <citation type="journal article" date="2002" name="Plant Cell">
        <title>Regulation of the pollen-specific actin-depolymerizing factor LlADF1.</title>
        <authorList>
            <person name="Allwood E.G."/>
            <person name="Anthony R.G."/>
            <person name="Smertenko A.P."/>
            <person name="Reichelt S."/>
            <person name="Drobak B.K."/>
            <person name="Doonan J.H."/>
            <person name="Weeds A.G."/>
            <person name="Hussey P.J."/>
        </authorList>
    </citation>
    <scope>INTERACTION WITH AIP1-1</scope>
</reference>
<reference key="7">
    <citation type="journal article" date="2004" name="Plant Physiol.">
        <title>Green fluorescent protein-mTalin causes defects in actin organization and cell expansion in Arabidopsis and inhibits actin depolymerizing factor's actin depolymerizing activity in vitro.</title>
        <authorList>
            <person name="Ketelaar T."/>
            <person name="Anthony R.G."/>
            <person name="Hussey P.J."/>
        </authorList>
    </citation>
    <scope>FUNCTION</scope>
</reference>
<reference key="8">
    <citation type="journal article" date="2009" name="Plant Cell">
        <title>Actin-depolymerizing factor2-mediated actin dynamics are essential for root-knot nematode infection of Arabidopsis.</title>
        <authorList>
            <person name="Clement M."/>
            <person name="Ketelaar T."/>
            <person name="Rodiuc N."/>
            <person name="Banora M.Y."/>
            <person name="Smertenko A."/>
            <person name="Engler G."/>
            <person name="Abad P."/>
            <person name="Hussey P.J."/>
            <person name="de Almeida Engler J."/>
        </authorList>
    </citation>
    <scope>FUNCTION</scope>
    <scope>INDUCTION</scope>
</reference>
<sequence length="137" mass="15745">MANAASGMAVHDDCKLKFMELKAKRTFRTIVYKIEDKQVIVEKLGEPEQSYDDFAASLPADDCRYCIYDFDFVTAENCQKSKIFFIAWSPDTAKVRDKMIYASSKDRFKRELDGIQVELQATDPTEMGLDVFKSRTN</sequence>
<comment type="function">
    <text evidence="4 5">Actin-depolymerizing protein. Severs actin filaments (F-actin) and binds to actin monomers (PubMed:15563618, PubMed:19794115). Required for normal cell growth, plant development, cell organ expansion and flowering. Essential for root-knot nematode infection (PubMed:19794115).</text>
</comment>
<comment type="subunit">
    <text evidence="3">Interacts with AIP1-1.</text>
</comment>
<comment type="subcellular location">
    <subcellularLocation>
        <location evidence="1">Cytoplasm</location>
        <location evidence="1">Cytoskeleton</location>
    </subcellularLocation>
</comment>
<comment type="induction">
    <text evidence="5">By the root-knot nematode Meloidogyne incognita.</text>
</comment>
<comment type="miscellaneous">
    <text evidence="5">Plants silencing ADF2 show net stabilization of F-actin that blocks cell maturation and root-knot nematode development and reproduction.</text>
</comment>
<comment type="similarity">
    <text evidence="6">Belongs to the actin-binding proteins ADF family.</text>
</comment>
<comment type="sequence caution" evidence="6">
    <conflict type="erroneous initiation">
        <sequence resource="EMBL-CDS" id="CAB82824"/>
    </conflict>
</comment>
<feature type="chain" id="PRO_0000214924" description="Actin-depolymerizing factor 2">
    <location>
        <begin position="1"/>
        <end position="137"/>
    </location>
</feature>
<feature type="domain" description="ADF-H" evidence="2">
    <location>
        <begin position="5"/>
        <end position="137"/>
    </location>
</feature>
<feature type="modified residue" description="Phosphoserine" evidence="1">
    <location>
        <position position="6"/>
    </location>
</feature>
<keyword id="KW-0009">Actin-binding</keyword>
<keyword id="KW-0963">Cytoplasm</keyword>
<keyword id="KW-0206">Cytoskeleton</keyword>
<keyword id="KW-0597">Phosphoprotein</keyword>
<keyword id="KW-0611">Plant defense</keyword>
<keyword id="KW-1185">Reference proteome</keyword>
<evidence type="ECO:0000250" key="1">
    <source>
        <dbReference type="UniProtKB" id="Q39250"/>
    </source>
</evidence>
<evidence type="ECO:0000255" key="2">
    <source>
        <dbReference type="PROSITE-ProRule" id="PRU00599"/>
    </source>
</evidence>
<evidence type="ECO:0000269" key="3">
    <source>
    </source>
</evidence>
<evidence type="ECO:0000269" key="4">
    <source>
    </source>
</evidence>
<evidence type="ECO:0000269" key="5">
    <source>
    </source>
</evidence>
<evidence type="ECO:0000305" key="6"/>
<name>ADF2_ARATH</name>